<accession>Q5E305</accession>
<dbReference type="EMBL" id="CP000020">
    <property type="protein sequence ID" value="AAW86591.1"/>
    <property type="molecule type" value="Genomic_DNA"/>
</dbReference>
<dbReference type="RefSeq" id="WP_005420732.1">
    <property type="nucleotide sequence ID" value="NC_006840.2"/>
</dbReference>
<dbReference type="RefSeq" id="YP_205479.1">
    <property type="nucleotide sequence ID" value="NC_006840.2"/>
</dbReference>
<dbReference type="SMR" id="Q5E305"/>
<dbReference type="STRING" id="312309.VF_2096"/>
<dbReference type="EnsemblBacteria" id="AAW86591">
    <property type="protein sequence ID" value="AAW86591"/>
    <property type="gene ID" value="VF_2096"/>
</dbReference>
<dbReference type="GeneID" id="54164801"/>
<dbReference type="KEGG" id="vfi:VF_2096"/>
<dbReference type="PATRIC" id="fig|312309.11.peg.2138"/>
<dbReference type="eggNOG" id="COG2938">
    <property type="taxonomic scope" value="Bacteria"/>
</dbReference>
<dbReference type="HOGENOM" id="CLU_103054_2_2_6"/>
<dbReference type="OrthoDB" id="9180899at2"/>
<dbReference type="Proteomes" id="UP000000537">
    <property type="component" value="Chromosome I"/>
</dbReference>
<dbReference type="GO" id="GO:0005737">
    <property type="term" value="C:cytoplasm"/>
    <property type="evidence" value="ECO:0007669"/>
    <property type="project" value="UniProtKB-SubCell"/>
</dbReference>
<dbReference type="GO" id="GO:0006105">
    <property type="term" value="P:succinate metabolic process"/>
    <property type="evidence" value="ECO:0007669"/>
    <property type="project" value="TreeGrafter"/>
</dbReference>
<dbReference type="FunFam" id="1.10.150.250:FF:000001">
    <property type="entry name" value="FAD assembly factor SdhE"/>
    <property type="match status" value="1"/>
</dbReference>
<dbReference type="Gene3D" id="1.10.150.250">
    <property type="entry name" value="Flavinator of succinate dehydrogenase"/>
    <property type="match status" value="1"/>
</dbReference>
<dbReference type="InterPro" id="IPR005631">
    <property type="entry name" value="SDH"/>
</dbReference>
<dbReference type="InterPro" id="IPR036714">
    <property type="entry name" value="SDH_sf"/>
</dbReference>
<dbReference type="InterPro" id="IPR050531">
    <property type="entry name" value="SdhE_FAD_assembly_factor"/>
</dbReference>
<dbReference type="PANTHER" id="PTHR39585">
    <property type="entry name" value="FAD ASSEMBLY FACTOR SDHE"/>
    <property type="match status" value="1"/>
</dbReference>
<dbReference type="PANTHER" id="PTHR39585:SF1">
    <property type="entry name" value="FAD ASSEMBLY FACTOR SDHE"/>
    <property type="match status" value="1"/>
</dbReference>
<dbReference type="Pfam" id="PF03937">
    <property type="entry name" value="Sdh5"/>
    <property type="match status" value="1"/>
</dbReference>
<dbReference type="SUPFAM" id="SSF109910">
    <property type="entry name" value="YgfY-like"/>
    <property type="match status" value="1"/>
</dbReference>
<reference key="1">
    <citation type="journal article" date="2005" name="Proc. Natl. Acad. Sci. U.S.A.">
        <title>Complete genome sequence of Vibrio fischeri: a symbiotic bacterium with pathogenic congeners.</title>
        <authorList>
            <person name="Ruby E.G."/>
            <person name="Urbanowski M."/>
            <person name="Campbell J."/>
            <person name="Dunn A."/>
            <person name="Faini M."/>
            <person name="Gunsalus R."/>
            <person name="Lostroh P."/>
            <person name="Lupp C."/>
            <person name="McCann J."/>
            <person name="Millikan D."/>
            <person name="Schaefer A."/>
            <person name="Stabb E."/>
            <person name="Stevens A."/>
            <person name="Visick K."/>
            <person name="Whistler C."/>
            <person name="Greenberg E.P."/>
        </authorList>
    </citation>
    <scope>NUCLEOTIDE SEQUENCE [LARGE SCALE GENOMIC DNA]</scope>
    <source>
        <strain>ATCC 700601 / ES114</strain>
    </source>
</reference>
<comment type="function">
    <text evidence="1">An FAD assembly protein, which accelerates covalent attachment of the cofactor into other proteins. Plays an essential role in the assembly of succinate dehydrogenase (SDH, respiratory complex II), an enzyme complex that is a component of both the tricarboxylic acid cycle and the electron transport chain, and which couples the oxidation of succinate to fumarate with the reduction of ubiquinone (coenzyme Q) to ubiquinol. Required for flavinylation (covalent attachment of FAD) of the flavoprotein subunit SdhA of SDH and other flavinylated proteins as well.</text>
</comment>
<comment type="subcellular location">
    <subcellularLocation>
        <location evidence="1">Cytoplasm</location>
    </subcellularLocation>
</comment>
<comment type="similarity">
    <text evidence="2">Belongs to the SdhE FAD assembly factor family.</text>
</comment>
<organism>
    <name type="scientific">Aliivibrio fischeri (strain ATCC 700601 / ES114)</name>
    <name type="common">Vibrio fischeri</name>
    <dbReference type="NCBI Taxonomy" id="312309"/>
    <lineage>
        <taxon>Bacteria</taxon>
        <taxon>Pseudomonadati</taxon>
        <taxon>Pseudomonadota</taxon>
        <taxon>Gammaproteobacteria</taxon>
        <taxon>Vibrionales</taxon>
        <taxon>Vibrionaceae</taxon>
        <taxon>Aliivibrio</taxon>
    </lineage>
</organism>
<gene>
    <name type="primary">sdhE</name>
    <name type="ordered locus">VF_2096</name>
</gene>
<keyword id="KW-0143">Chaperone</keyword>
<keyword id="KW-0963">Cytoplasm</keyword>
<keyword id="KW-1185">Reference proteome</keyword>
<feature type="chain" id="PRO_0000214426" description="FAD assembly factor SdhE">
    <location>
        <begin position="1"/>
        <end position="86"/>
    </location>
</feature>
<name>SDHE_ALIF1</name>
<sequence length="86" mass="9980">MYSAEEKARVKWACRRGMLELDVVIMPFFDECFEELTEAEQQAFVSLLECDDPDLFTWVMGHGRSDNLAHASMVDKIVEHNLSKLR</sequence>
<evidence type="ECO:0000250" key="1">
    <source>
        <dbReference type="UniProtKB" id="G4V4G2"/>
    </source>
</evidence>
<evidence type="ECO:0000305" key="2"/>
<protein>
    <recommendedName>
        <fullName>FAD assembly factor SdhE</fullName>
    </recommendedName>
</protein>
<proteinExistence type="inferred from homology"/>